<proteinExistence type="inferred from homology"/>
<comment type="function">
    <text evidence="1">Catalyzes the conversion of L-arabinose to L-ribulose.</text>
</comment>
<comment type="catalytic activity">
    <reaction evidence="1">
        <text>beta-L-arabinopyranose = L-ribulose</text>
        <dbReference type="Rhea" id="RHEA:14821"/>
        <dbReference type="ChEBI" id="CHEBI:16880"/>
        <dbReference type="ChEBI" id="CHEBI:40886"/>
        <dbReference type="EC" id="5.3.1.4"/>
    </reaction>
</comment>
<comment type="cofactor">
    <cofactor evidence="1">
        <name>Mn(2+)</name>
        <dbReference type="ChEBI" id="CHEBI:29035"/>
    </cofactor>
    <text evidence="1">Binds 1 Mn(2+) ion per subunit.</text>
</comment>
<comment type="pathway">
    <text evidence="1">Carbohydrate degradation; L-arabinose degradation via L-ribulose; D-xylulose 5-phosphate from L-arabinose (bacterial route): step 1/3.</text>
</comment>
<comment type="similarity">
    <text evidence="1">Belongs to the arabinose isomerase family.</text>
</comment>
<gene>
    <name evidence="1" type="primary">araA</name>
    <name type="ordered locus">BLD_1018</name>
</gene>
<name>ARAA_BIFLD</name>
<evidence type="ECO:0000255" key="1">
    <source>
        <dbReference type="HAMAP-Rule" id="MF_00519"/>
    </source>
</evidence>
<keyword id="KW-0054">Arabinose catabolism</keyword>
<keyword id="KW-0119">Carbohydrate metabolism</keyword>
<keyword id="KW-0413">Isomerase</keyword>
<keyword id="KW-0464">Manganese</keyword>
<keyword id="KW-0479">Metal-binding</keyword>
<reference key="1">
    <citation type="journal article" date="2008" name="BMC Genomics">
        <title>Comparative genomic analysis of the gut bacterium Bifidobacterium longum reveals loci susceptible to deletion during pure culture growth.</title>
        <authorList>
            <person name="Lee J.H."/>
            <person name="Karamychev V.N."/>
            <person name="Kozyavkin S.A."/>
            <person name="Mills D."/>
            <person name="Pavlov A.R."/>
            <person name="Pavlova N.V."/>
            <person name="Polouchine N.N."/>
            <person name="Richardson P.M."/>
            <person name="Shakhova V.V."/>
            <person name="Slesarev A.I."/>
            <person name="Weimer B."/>
            <person name="O'Sullivan D.J."/>
        </authorList>
    </citation>
    <scope>NUCLEOTIDE SEQUENCE [LARGE SCALE GENOMIC DNA]</scope>
    <source>
        <strain>DJO10A</strain>
    </source>
</reference>
<dbReference type="EC" id="5.3.1.4" evidence="1"/>
<dbReference type="EMBL" id="CP000605">
    <property type="protein sequence ID" value="ACD98464.1"/>
    <property type="molecule type" value="Genomic_DNA"/>
</dbReference>
<dbReference type="RefSeq" id="WP_007051388.1">
    <property type="nucleotide sequence ID" value="NZ_AABM02000007.1"/>
</dbReference>
<dbReference type="SMR" id="B3DTJ5"/>
<dbReference type="GeneID" id="69577588"/>
<dbReference type="KEGG" id="blj:BLD_1018"/>
<dbReference type="HOGENOM" id="CLU_045663_0_0_11"/>
<dbReference type="UniPathway" id="UPA00145">
    <property type="reaction ID" value="UER00565"/>
</dbReference>
<dbReference type="Proteomes" id="UP000002419">
    <property type="component" value="Chromosome"/>
</dbReference>
<dbReference type="GO" id="GO:0005829">
    <property type="term" value="C:cytosol"/>
    <property type="evidence" value="ECO:0007669"/>
    <property type="project" value="TreeGrafter"/>
</dbReference>
<dbReference type="GO" id="GO:0008733">
    <property type="term" value="F:L-arabinose isomerase activity"/>
    <property type="evidence" value="ECO:0007669"/>
    <property type="project" value="UniProtKB-UniRule"/>
</dbReference>
<dbReference type="GO" id="GO:0030145">
    <property type="term" value="F:manganese ion binding"/>
    <property type="evidence" value="ECO:0007669"/>
    <property type="project" value="UniProtKB-UniRule"/>
</dbReference>
<dbReference type="GO" id="GO:0019569">
    <property type="term" value="P:L-arabinose catabolic process to xylulose 5-phosphate"/>
    <property type="evidence" value="ECO:0007669"/>
    <property type="project" value="UniProtKB-UniRule"/>
</dbReference>
<dbReference type="Gene3D" id="3.40.50.10940">
    <property type="match status" value="1"/>
</dbReference>
<dbReference type="HAMAP" id="MF_00519">
    <property type="entry name" value="Arabinose_Isome"/>
    <property type="match status" value="1"/>
</dbReference>
<dbReference type="InterPro" id="IPR024664">
    <property type="entry name" value="Ara_Isoase_C"/>
</dbReference>
<dbReference type="InterPro" id="IPR055390">
    <property type="entry name" value="AraA_central"/>
</dbReference>
<dbReference type="InterPro" id="IPR055389">
    <property type="entry name" value="AraA_N"/>
</dbReference>
<dbReference type="InterPro" id="IPR038583">
    <property type="entry name" value="AraA_N_sf"/>
</dbReference>
<dbReference type="InterPro" id="IPR004216">
    <property type="entry name" value="Fuc/Ara_isomerase_C"/>
</dbReference>
<dbReference type="InterPro" id="IPR009015">
    <property type="entry name" value="Fucose_isomerase_N/cen_sf"/>
</dbReference>
<dbReference type="InterPro" id="IPR003762">
    <property type="entry name" value="Lara_isomerase"/>
</dbReference>
<dbReference type="NCBIfam" id="NF002795">
    <property type="entry name" value="PRK02929.1"/>
    <property type="match status" value="1"/>
</dbReference>
<dbReference type="PANTHER" id="PTHR38464">
    <property type="entry name" value="L-ARABINOSE ISOMERASE"/>
    <property type="match status" value="1"/>
</dbReference>
<dbReference type="PANTHER" id="PTHR38464:SF1">
    <property type="entry name" value="L-ARABINOSE ISOMERASE"/>
    <property type="match status" value="1"/>
</dbReference>
<dbReference type="Pfam" id="PF24856">
    <property type="entry name" value="AraA_central"/>
    <property type="match status" value="1"/>
</dbReference>
<dbReference type="Pfam" id="PF02610">
    <property type="entry name" value="AraA_N"/>
    <property type="match status" value="1"/>
</dbReference>
<dbReference type="Pfam" id="PF11762">
    <property type="entry name" value="Arabinose_Iso_C"/>
    <property type="match status" value="1"/>
</dbReference>
<dbReference type="PIRSF" id="PIRSF001478">
    <property type="entry name" value="L-ara_isomerase"/>
    <property type="match status" value="1"/>
</dbReference>
<dbReference type="SUPFAM" id="SSF50443">
    <property type="entry name" value="FucI/AraA C-terminal domain-like"/>
    <property type="match status" value="1"/>
</dbReference>
<dbReference type="SUPFAM" id="SSF53743">
    <property type="entry name" value="FucI/AraA N-terminal and middle domains"/>
    <property type="match status" value="1"/>
</dbReference>
<accession>B3DTJ5</accession>
<sequence length="505" mass="55868">MVMENPFEGKEIWFGVGSQDLYGEEALRQVAIHSAEMVDYLNNTGKIPAKIVLKPTLKSSDGVKEFMVEASANPNVIGVITWCHTFSPAKMWIRGLEVLTKPLLQLATQHHKEIPWETIDMDFMNLNQAAHGDREFGYIVSRLGIKRKVVVGHYTDPEVAEKLGTWARACAGWDASNNMKVMRWGDNMRNVAVTEGDKTEAERVFGASINTWAVNELVAAYDAVKDDQVKEIIEDYKAKYDVDPALLDAKYDSLFIAAKEEAAMVNMMRANGCTAGVDNFEDLGALPQLPGVGPQRFPSEYGWGFSAEGDWKTAVLVRIGAVMGYGLEGGASLMEDYSYNFTEGDELDMGSHMLEVSPSIGTIAKPKLEIHPLGIGGKADPVRLVFSGKPAKDAVVVSMSDVRERFRLLMDVVDVVEPQGSLKELPCARAVWEPKPSLKTAVECWITAGGSHHTCMTTSVGREAWEDFARIAGVELAVIDENTTARQFEKELELSEMYHRLNNQH</sequence>
<feature type="chain" id="PRO_1000127597" description="L-arabinose isomerase">
    <location>
        <begin position="1"/>
        <end position="505"/>
    </location>
</feature>
<feature type="binding site" evidence="1">
    <location>
        <position position="308"/>
    </location>
    <ligand>
        <name>Mn(2+)</name>
        <dbReference type="ChEBI" id="CHEBI:29035"/>
    </ligand>
</feature>
<feature type="binding site" evidence="1">
    <location>
        <position position="335"/>
    </location>
    <ligand>
        <name>Mn(2+)</name>
        <dbReference type="ChEBI" id="CHEBI:29035"/>
    </ligand>
</feature>
<feature type="binding site" evidence="1">
    <location>
        <position position="352"/>
    </location>
    <ligand>
        <name>Mn(2+)</name>
        <dbReference type="ChEBI" id="CHEBI:29035"/>
    </ligand>
</feature>
<feature type="binding site" evidence="1">
    <location>
        <position position="453"/>
    </location>
    <ligand>
        <name>Mn(2+)</name>
        <dbReference type="ChEBI" id="CHEBI:29035"/>
    </ligand>
</feature>
<organism>
    <name type="scientific">Bifidobacterium longum (strain DJO10A)</name>
    <dbReference type="NCBI Taxonomy" id="205913"/>
    <lineage>
        <taxon>Bacteria</taxon>
        <taxon>Bacillati</taxon>
        <taxon>Actinomycetota</taxon>
        <taxon>Actinomycetes</taxon>
        <taxon>Bifidobacteriales</taxon>
        <taxon>Bifidobacteriaceae</taxon>
        <taxon>Bifidobacterium</taxon>
    </lineage>
</organism>
<protein>
    <recommendedName>
        <fullName evidence="1">L-arabinose isomerase</fullName>
        <ecNumber evidence="1">5.3.1.4</ecNumber>
    </recommendedName>
</protein>